<organism>
    <name type="scientific">Helarctos malayanus</name>
    <name type="common">Malayan sun bear</name>
    <name type="synonym">Ursus malayanus</name>
    <dbReference type="NCBI Taxonomy" id="9634"/>
    <lineage>
        <taxon>Eukaryota</taxon>
        <taxon>Metazoa</taxon>
        <taxon>Chordata</taxon>
        <taxon>Craniata</taxon>
        <taxon>Vertebrata</taxon>
        <taxon>Euteleostomi</taxon>
        <taxon>Mammalia</taxon>
        <taxon>Eutheria</taxon>
        <taxon>Laurasiatheria</taxon>
        <taxon>Carnivora</taxon>
        <taxon>Caniformia</taxon>
        <taxon>Ursidae</taxon>
        <taxon>Helarctos</taxon>
    </lineage>
</organism>
<protein>
    <recommendedName>
        <fullName>NADH-ubiquinone oxidoreductase chain 4L</fullName>
        <ecNumber>7.1.1.2</ecNumber>
    </recommendedName>
    <alternativeName>
        <fullName>NADH dehydrogenase subunit 4L</fullName>
    </alternativeName>
</protein>
<feature type="chain" id="PRO_0000275140" description="NADH-ubiquinone oxidoreductase chain 4L">
    <location>
        <begin position="1"/>
        <end position="98"/>
    </location>
</feature>
<feature type="transmembrane region" description="Helical" evidence="3">
    <location>
        <begin position="1"/>
        <end position="21"/>
    </location>
</feature>
<feature type="transmembrane region" description="Helical" evidence="3">
    <location>
        <begin position="29"/>
        <end position="49"/>
    </location>
</feature>
<feature type="transmembrane region" description="Helical" evidence="3">
    <location>
        <begin position="61"/>
        <end position="81"/>
    </location>
</feature>
<keyword id="KW-0249">Electron transport</keyword>
<keyword id="KW-0472">Membrane</keyword>
<keyword id="KW-0496">Mitochondrion</keyword>
<keyword id="KW-0999">Mitochondrion inner membrane</keyword>
<keyword id="KW-0520">NAD</keyword>
<keyword id="KW-0679">Respiratory chain</keyword>
<keyword id="KW-1278">Translocase</keyword>
<keyword id="KW-0812">Transmembrane</keyword>
<keyword id="KW-1133">Transmembrane helix</keyword>
<keyword id="KW-0813">Transport</keyword>
<keyword id="KW-0830">Ubiquinone</keyword>
<reference key="1">
    <citation type="journal article" date="2005" name="Mol. Phylogenet. Evol.">
        <title>A phylogeny of the Caniformia (order Carnivora) based on 12 complete protein-coding mitochondrial genes.</title>
        <authorList>
            <person name="Delisle I."/>
            <person name="Strobeck C."/>
        </authorList>
    </citation>
    <scope>NUCLEOTIDE SEQUENCE [GENOMIC DNA]</scope>
</reference>
<comment type="function">
    <text evidence="1">Core subunit of the mitochondrial membrane respiratory chain NADH dehydrogenase (Complex I) which catalyzes electron transfer from NADH through the respiratory chain, using ubiquinone as an electron acceptor. Part of the enzyme membrane arm which is embedded in the lipid bilayer and involved in proton translocation.</text>
</comment>
<comment type="catalytic activity">
    <reaction evidence="1">
        <text>a ubiquinone + NADH + 5 H(+)(in) = a ubiquinol + NAD(+) + 4 H(+)(out)</text>
        <dbReference type="Rhea" id="RHEA:29091"/>
        <dbReference type="Rhea" id="RHEA-COMP:9565"/>
        <dbReference type="Rhea" id="RHEA-COMP:9566"/>
        <dbReference type="ChEBI" id="CHEBI:15378"/>
        <dbReference type="ChEBI" id="CHEBI:16389"/>
        <dbReference type="ChEBI" id="CHEBI:17976"/>
        <dbReference type="ChEBI" id="CHEBI:57540"/>
        <dbReference type="ChEBI" id="CHEBI:57945"/>
        <dbReference type="EC" id="7.1.1.2"/>
    </reaction>
    <physiologicalReaction direction="left-to-right" evidence="1">
        <dbReference type="Rhea" id="RHEA:29092"/>
    </physiologicalReaction>
</comment>
<comment type="subunit">
    <text evidence="2">Core subunit of respiratory chain NADH dehydrogenase (Complex I) which is composed of 45 different subunits.</text>
</comment>
<comment type="subcellular location">
    <subcellularLocation>
        <location evidence="2">Mitochondrion inner membrane</location>
        <topology evidence="3">Multi-pass membrane protein</topology>
    </subcellularLocation>
</comment>
<comment type="similarity">
    <text evidence="4">Belongs to the complex I subunit 4L family.</text>
</comment>
<geneLocation type="mitochondrion"/>
<gene>
    <name type="primary">MT-ND4L</name>
    <name type="synonym">MTND4L</name>
    <name type="synonym">NADH4L</name>
    <name type="synonym">ND4L</name>
</gene>
<sequence length="98" mass="10775">MPVVYVNIFLAFIVSLTGLLIYRSHLMSSLLCLEGMMLSLFVMLTVTVLNNHFTLANMAPIILLVFAACEAALGLSLLVMVSNTYGTDYVQNLNLLQC</sequence>
<name>NU4LM_HELMA</name>
<proteinExistence type="inferred from homology"/>
<accession>Q3L6P5</accession>
<dbReference type="EC" id="7.1.1.2"/>
<dbReference type="EMBL" id="AY598593">
    <property type="protein sequence ID" value="AAU00539.1"/>
    <property type="molecule type" value="Genomic_DNA"/>
</dbReference>
<dbReference type="RefSeq" id="YP_001542763.1">
    <property type="nucleotide sequence ID" value="NC_009968.1"/>
</dbReference>
<dbReference type="SMR" id="Q3L6P5"/>
<dbReference type="GeneID" id="5729824"/>
<dbReference type="CTD" id="4539"/>
<dbReference type="GO" id="GO:0005743">
    <property type="term" value="C:mitochondrial inner membrane"/>
    <property type="evidence" value="ECO:0000250"/>
    <property type="project" value="UniProtKB"/>
</dbReference>
<dbReference type="GO" id="GO:0045271">
    <property type="term" value="C:respiratory chain complex I"/>
    <property type="evidence" value="ECO:0000250"/>
    <property type="project" value="UniProtKB"/>
</dbReference>
<dbReference type="GO" id="GO:0008137">
    <property type="term" value="F:NADH dehydrogenase (ubiquinone) activity"/>
    <property type="evidence" value="ECO:0000250"/>
    <property type="project" value="UniProtKB"/>
</dbReference>
<dbReference type="GO" id="GO:0042773">
    <property type="term" value="P:ATP synthesis coupled electron transport"/>
    <property type="evidence" value="ECO:0007669"/>
    <property type="project" value="InterPro"/>
</dbReference>
<dbReference type="FunFam" id="1.10.287.3510:FF:000002">
    <property type="entry name" value="NADH-ubiquinone oxidoreductase chain 4L"/>
    <property type="match status" value="1"/>
</dbReference>
<dbReference type="Gene3D" id="1.10.287.3510">
    <property type="match status" value="1"/>
</dbReference>
<dbReference type="InterPro" id="IPR001133">
    <property type="entry name" value="NADH_UbQ_OxRdtase_chain4L/K"/>
</dbReference>
<dbReference type="InterPro" id="IPR039428">
    <property type="entry name" value="NUOK/Mnh_C1-like"/>
</dbReference>
<dbReference type="PANTHER" id="PTHR11434:SF0">
    <property type="entry name" value="NADH-UBIQUINONE OXIDOREDUCTASE CHAIN 4L"/>
    <property type="match status" value="1"/>
</dbReference>
<dbReference type="PANTHER" id="PTHR11434">
    <property type="entry name" value="NADH-UBIQUINONE OXIDOREDUCTASE SUBUNIT ND4L"/>
    <property type="match status" value="1"/>
</dbReference>
<dbReference type="Pfam" id="PF00420">
    <property type="entry name" value="Oxidored_q2"/>
    <property type="match status" value="1"/>
</dbReference>
<evidence type="ECO:0000250" key="1">
    <source>
        <dbReference type="UniProtKB" id="P03901"/>
    </source>
</evidence>
<evidence type="ECO:0000250" key="2">
    <source>
        <dbReference type="UniProtKB" id="P03902"/>
    </source>
</evidence>
<evidence type="ECO:0000255" key="3"/>
<evidence type="ECO:0000305" key="4"/>